<organismHost>
    <name type="scientific">Escherichia coli</name>
    <dbReference type="NCBI Taxonomy" id="562"/>
</organismHost>
<feature type="chain" id="PRO_0000077705" description="Probable helicase loader">
    <location>
        <begin position="1"/>
        <end position="229"/>
    </location>
</feature>
<protein>
    <recommendedName>
        <fullName evidence="1">Probable helicase loader</fullName>
    </recommendedName>
    <alternativeName>
        <fullName>Replication protein 14</fullName>
    </alternativeName>
</protein>
<organism>
    <name type="scientific">Enterobacteria phage phi80</name>
    <name type="common">Bacteriophage phi-80</name>
    <dbReference type="NCBI Taxonomy" id="10713"/>
    <lineage>
        <taxon>Viruses</taxon>
        <taxon>Duplodnaviria</taxon>
        <taxon>Heunggongvirae</taxon>
        <taxon>Uroviricota</taxon>
        <taxon>Caudoviricetes</taxon>
    </lineage>
</organism>
<proteinExistence type="inferred from homology"/>
<gene>
    <name type="primary">14</name>
</gene>
<comment type="function">
    <text evidence="1">May load (host) replicative DNA helicase DnaB onto single-stranded (ss)DNA at the origin of replication.</text>
</comment>
<comment type="subunit">
    <text evidence="1">Forms a (host) DnaB(6):helicase loader(5) complex in the presence of ssDNA.</text>
</comment>
<comment type="miscellaneous">
    <text>Its C-terminal half might bind to the gene 15 protein and its N-terminal half might bind in addition to bacterial replication functions.</text>
</comment>
<comment type="similarity">
    <text evidence="2">Belongs to the phage P protein family.</text>
</comment>
<accession>P14814</accession>
<name>VG14_BPPH8</name>
<dbReference type="EMBL" id="X13065">
    <property type="protein sequence ID" value="CAA31475.1"/>
    <property type="molecule type" value="Genomic_DNA"/>
</dbReference>
<dbReference type="PIR" id="S01777">
    <property type="entry name" value="PQBP14"/>
</dbReference>
<dbReference type="RefSeq" id="YP_007947972.1">
    <property type="nucleotide sequence ID" value="NC_021190.1"/>
</dbReference>
<dbReference type="SMR" id="P14814"/>
<dbReference type="KEGG" id="vg:24366484"/>
<dbReference type="OrthoDB" id="7548at10239"/>
<dbReference type="GO" id="GO:0006270">
    <property type="term" value="P:DNA replication initiation"/>
    <property type="evidence" value="ECO:0007669"/>
    <property type="project" value="InterPro"/>
</dbReference>
<dbReference type="GO" id="GO:0039693">
    <property type="term" value="P:viral DNA genome replication"/>
    <property type="evidence" value="ECO:0007669"/>
    <property type="project" value="UniProtKB-KW"/>
</dbReference>
<dbReference type="InterPro" id="IPR009731">
    <property type="entry name" value="P-like"/>
</dbReference>
<dbReference type="Pfam" id="PF06992">
    <property type="entry name" value="Phage_lambda_P"/>
    <property type="match status" value="1"/>
</dbReference>
<keyword id="KW-0235">DNA replication</keyword>
<keyword id="KW-0244">Early protein</keyword>
<keyword id="KW-0945">Host-virus interaction</keyword>
<keyword id="KW-1194">Viral DNA replication</keyword>
<reference key="1">
    <citation type="journal article" date="1988" name="J. Mol. Biol.">
        <title>Organization of the early region of bacteriophage phi 80. Genes and proteins.</title>
        <authorList>
            <person name="Ogawa T."/>
            <person name="Ogawa H."/>
            <person name="Tomizawa J."/>
        </authorList>
    </citation>
    <scope>NUCLEOTIDE SEQUENCE [GENOMIC DNA]</scope>
</reference>
<evidence type="ECO:0000250" key="1">
    <source>
        <dbReference type="UniProtKB" id="P03689"/>
    </source>
</evidence>
<evidence type="ECO:0000305" key="2"/>
<sequence>MKSLAEQMRNHDREQMSRMAHNLPEQYQECAPVEQVAQVFNKLFNELRAAFPASMANFRTQEDLNEFRRQWLLAFQENGIHTMAQVDAGMRIARRQERPFLPSPGQFVAWCKQSGGALGVNVDQVIAEYWEWRNRSFEFISSEQFPWSQPVMYHICVELRHRSTERQLTHGELAREAGDLLDMWERRVTEGKPVPPVRRAIAAPAAEQGPTPIQLLLAKYNRNKSNGMV</sequence>